<proteinExistence type="inferred from homology"/>
<feature type="chain" id="PRO_0000325494" description="Probable malate:quinone oxidoreductase">
    <location>
        <begin position="1"/>
        <end position="552"/>
    </location>
</feature>
<feature type="region of interest" description="Disordered" evidence="2">
    <location>
        <begin position="530"/>
        <end position="552"/>
    </location>
</feature>
<feature type="compositionally biased region" description="Polar residues" evidence="2">
    <location>
        <begin position="542"/>
        <end position="552"/>
    </location>
</feature>
<dbReference type="EC" id="1.1.5.4" evidence="1"/>
<dbReference type="EMBL" id="CP000783">
    <property type="protein sequence ID" value="ABU79002.1"/>
    <property type="molecule type" value="Genomic_DNA"/>
</dbReference>
<dbReference type="RefSeq" id="WP_012126077.1">
    <property type="nucleotide sequence ID" value="NC_009778.1"/>
</dbReference>
<dbReference type="SMR" id="A7MNG1"/>
<dbReference type="KEGG" id="esa:ESA_03816"/>
<dbReference type="PATRIC" id="fig|290339.8.peg.3390"/>
<dbReference type="HOGENOM" id="CLU_028151_0_0_6"/>
<dbReference type="UniPathway" id="UPA00223">
    <property type="reaction ID" value="UER01008"/>
</dbReference>
<dbReference type="Proteomes" id="UP000000260">
    <property type="component" value="Chromosome"/>
</dbReference>
<dbReference type="GO" id="GO:0047545">
    <property type="term" value="F:2-hydroxyglutarate dehydrogenase activity"/>
    <property type="evidence" value="ECO:0007669"/>
    <property type="project" value="TreeGrafter"/>
</dbReference>
<dbReference type="GO" id="GO:0008924">
    <property type="term" value="F:L-malate dehydrogenase (quinone) activity"/>
    <property type="evidence" value="ECO:0007669"/>
    <property type="project" value="UniProtKB-UniRule"/>
</dbReference>
<dbReference type="GO" id="GO:0006099">
    <property type="term" value="P:tricarboxylic acid cycle"/>
    <property type="evidence" value="ECO:0007669"/>
    <property type="project" value="UniProtKB-UniRule"/>
</dbReference>
<dbReference type="Gene3D" id="3.30.9.10">
    <property type="entry name" value="D-Amino Acid Oxidase, subunit A, domain 2"/>
    <property type="match status" value="1"/>
</dbReference>
<dbReference type="Gene3D" id="3.50.50.60">
    <property type="entry name" value="FAD/NAD(P)-binding domain"/>
    <property type="match status" value="1"/>
</dbReference>
<dbReference type="HAMAP" id="MF_00212">
    <property type="entry name" value="MQO"/>
    <property type="match status" value="1"/>
</dbReference>
<dbReference type="InterPro" id="IPR036188">
    <property type="entry name" value="FAD/NAD-bd_sf"/>
</dbReference>
<dbReference type="InterPro" id="IPR006231">
    <property type="entry name" value="MQO"/>
</dbReference>
<dbReference type="NCBIfam" id="TIGR01320">
    <property type="entry name" value="mal_quin_oxido"/>
    <property type="match status" value="1"/>
</dbReference>
<dbReference type="NCBIfam" id="NF003603">
    <property type="entry name" value="PRK05257.1-1"/>
    <property type="match status" value="1"/>
</dbReference>
<dbReference type="NCBIfam" id="NF003605">
    <property type="entry name" value="PRK05257.1-4"/>
    <property type="match status" value="1"/>
</dbReference>
<dbReference type="NCBIfam" id="NF003606">
    <property type="entry name" value="PRK05257.2-1"/>
    <property type="match status" value="1"/>
</dbReference>
<dbReference type="NCBIfam" id="NF003611">
    <property type="entry name" value="PRK05257.3-2"/>
    <property type="match status" value="1"/>
</dbReference>
<dbReference type="NCBIfam" id="NF009875">
    <property type="entry name" value="PRK13339.1"/>
    <property type="match status" value="1"/>
</dbReference>
<dbReference type="PANTHER" id="PTHR43104">
    <property type="entry name" value="L-2-HYDROXYGLUTARATE DEHYDROGENASE, MITOCHONDRIAL"/>
    <property type="match status" value="1"/>
</dbReference>
<dbReference type="PANTHER" id="PTHR43104:SF2">
    <property type="entry name" value="L-2-HYDROXYGLUTARATE DEHYDROGENASE, MITOCHONDRIAL"/>
    <property type="match status" value="1"/>
</dbReference>
<dbReference type="Pfam" id="PF06039">
    <property type="entry name" value="Mqo"/>
    <property type="match status" value="1"/>
</dbReference>
<dbReference type="SUPFAM" id="SSF51905">
    <property type="entry name" value="FAD/NAD(P)-binding domain"/>
    <property type="match status" value="1"/>
</dbReference>
<organism>
    <name type="scientific">Cronobacter sakazakii (strain ATCC BAA-894)</name>
    <name type="common">Enterobacter sakazakii</name>
    <dbReference type="NCBI Taxonomy" id="290339"/>
    <lineage>
        <taxon>Bacteria</taxon>
        <taxon>Pseudomonadati</taxon>
        <taxon>Pseudomonadota</taxon>
        <taxon>Gammaproteobacteria</taxon>
        <taxon>Enterobacterales</taxon>
        <taxon>Enterobacteriaceae</taxon>
        <taxon>Cronobacter</taxon>
    </lineage>
</organism>
<evidence type="ECO:0000255" key="1">
    <source>
        <dbReference type="HAMAP-Rule" id="MF_00212"/>
    </source>
</evidence>
<evidence type="ECO:0000256" key="2">
    <source>
        <dbReference type="SAM" id="MobiDB-lite"/>
    </source>
</evidence>
<reference key="1">
    <citation type="journal article" date="2010" name="PLoS ONE">
        <title>Genome sequence of Cronobacter sakazakii BAA-894 and comparative genomic hybridization analysis with other Cronobacter species.</title>
        <authorList>
            <person name="Kucerova E."/>
            <person name="Clifton S.W."/>
            <person name="Xia X.Q."/>
            <person name="Long F."/>
            <person name="Porwollik S."/>
            <person name="Fulton L."/>
            <person name="Fronick C."/>
            <person name="Minx P."/>
            <person name="Kyung K."/>
            <person name="Warren W."/>
            <person name="Fulton R."/>
            <person name="Feng D."/>
            <person name="Wollam A."/>
            <person name="Shah N."/>
            <person name="Bhonagiri V."/>
            <person name="Nash W.E."/>
            <person name="Hallsworth-Pepin K."/>
            <person name="Wilson R.K."/>
            <person name="McClelland M."/>
            <person name="Forsythe S.J."/>
        </authorList>
    </citation>
    <scope>NUCLEOTIDE SEQUENCE [LARGE SCALE GENOMIC DNA]</scope>
    <source>
        <strain>ATCC BAA-894</strain>
    </source>
</reference>
<sequence>MSKITLSRKHAPAFSLIALLVSSAAYAENTTEKTDVLLIGGGIMSASLGTVLQEIQPDWKQLMVEKLDGVALESSNGWNNAGTGHSANMELNYTPEREDGSIDVTKALEINEAFMISRQFWSSQVKRGVLNDPHSFINSTPHMSFVWGDKNVEYLTKRYQALQQTTLFQGMQFSTDQQQIKKWAPLIIEGRDPKQKVAATWTPVGTDVNYGEITRQLVGSLKKTSNFKLETSSEVTDFKRNADNSWHVTITDVKSGKEHAVDAKYVFIGAGGGALKLLQKTGIPEADNYAGFPVGGSFLVSENPEIARQHGEKVYGQASVGAPPMSVPHLDARFLDGKRVVLFGPFATFSTKFLKNGSFFDLLSTTTTSNFMPMTDVGLDNFDLVKYLIGQVMLSDEDRFEALKEYYPTARKEDWKLIQAGQRVQIIKKDPEKGGVLKLGTEIVTDQQKTLAALLGASPGASTAAPISINVIKQLFPEQFKSEAWQSKLREIVPSYGQKLNGNVALTQQVWDETAATLQLTKPPVIQMKDAKPATPEAKPAQASSPQHDMAL</sequence>
<accession>A7MNG1</accession>
<name>MQO_CROS8</name>
<keyword id="KW-0274">FAD</keyword>
<keyword id="KW-0285">Flavoprotein</keyword>
<keyword id="KW-0560">Oxidoreductase</keyword>
<keyword id="KW-1185">Reference proteome</keyword>
<keyword id="KW-0816">Tricarboxylic acid cycle</keyword>
<protein>
    <recommendedName>
        <fullName evidence="1">Probable malate:quinone oxidoreductase</fullName>
        <ecNumber evidence="1">1.1.5.4</ecNumber>
    </recommendedName>
    <alternativeName>
        <fullName evidence="1">MQO</fullName>
    </alternativeName>
    <alternativeName>
        <fullName evidence="1">Malate dehydrogenase [quinone]</fullName>
    </alternativeName>
</protein>
<comment type="catalytic activity">
    <reaction evidence="1">
        <text>(S)-malate + a quinone = a quinol + oxaloacetate</text>
        <dbReference type="Rhea" id="RHEA:46012"/>
        <dbReference type="ChEBI" id="CHEBI:15589"/>
        <dbReference type="ChEBI" id="CHEBI:16452"/>
        <dbReference type="ChEBI" id="CHEBI:24646"/>
        <dbReference type="ChEBI" id="CHEBI:132124"/>
        <dbReference type="EC" id="1.1.5.4"/>
    </reaction>
</comment>
<comment type="cofactor">
    <cofactor evidence="1">
        <name>FAD</name>
        <dbReference type="ChEBI" id="CHEBI:57692"/>
    </cofactor>
</comment>
<comment type="pathway">
    <text evidence="1">Carbohydrate metabolism; tricarboxylic acid cycle; oxaloacetate from (S)-malate (quinone route): step 1/1.</text>
</comment>
<comment type="similarity">
    <text evidence="1">Belongs to the MQO family.</text>
</comment>
<gene>
    <name evidence="1" type="primary">mqo</name>
    <name type="ordered locus">ESA_03816</name>
</gene>